<organism>
    <name type="scientific">Clostridium sporogenes (strain ATCC 15579)</name>
    <dbReference type="NCBI Taxonomy" id="471871"/>
    <lineage>
        <taxon>Bacteria</taxon>
        <taxon>Bacillati</taxon>
        <taxon>Bacillota</taxon>
        <taxon>Clostridia</taxon>
        <taxon>Eubacteriales</taxon>
        <taxon>Clostridiaceae</taxon>
        <taxon>Clostridium</taxon>
    </lineage>
</organism>
<comment type="function">
    <text evidence="2">Catalyzes the decarboxylation of tryptophan to tryptamine. Tryptamine is a neurotransmitter that induces the release of serotonin, which is suggested to modulate gastrointestinal motility. Therefore, the tryptophan decarboxylase from the gut bacteria Clostridium sporogenes (strain ATCC 15579) may influence host brain and behavior. Has weak activity with tyrosine. Activity against phenylalanine is undetectable.</text>
</comment>
<comment type="catalytic activity">
    <reaction evidence="2">
        <text>L-tryptophan + H(+) = tryptamine + CO2</text>
        <dbReference type="Rhea" id="RHEA:30339"/>
        <dbReference type="ChEBI" id="CHEBI:15378"/>
        <dbReference type="ChEBI" id="CHEBI:16526"/>
        <dbReference type="ChEBI" id="CHEBI:57887"/>
        <dbReference type="ChEBI" id="CHEBI:57912"/>
        <dbReference type="EC" id="4.1.1.105"/>
    </reaction>
</comment>
<comment type="cofactor">
    <cofactor evidence="1">
        <name>pyridoxal 5'-phosphate</name>
        <dbReference type="ChEBI" id="CHEBI:597326"/>
    </cofactor>
</comment>
<comment type="activity regulation">
    <text evidence="2">Inhibited by (S)-alpha-fluoromethyltryptophan.</text>
</comment>
<comment type="biophysicochemical properties">
    <kinetics>
        <KM evidence="2">2.8 mM for tryptophan</KM>
        <text evidence="2">kcat is 1200 min(-1) with tryptophan as substrate.</text>
    </kinetics>
</comment>
<comment type="subcellular location">
    <subcellularLocation>
        <location evidence="4">Cytoplasm</location>
    </subcellularLocation>
    <text evidence="2">In vitro, tryptamine is excreted into the extracellular fluid, suggesting that the bacterium has the potential to excrete tryptamine in the host gut lumen.</text>
</comment>
<comment type="similarity">
    <text evidence="4">Belongs to the group II decarboxylase family.</text>
</comment>
<keyword id="KW-0963">Cytoplasm</keyword>
<keyword id="KW-0210">Decarboxylase</keyword>
<keyword id="KW-0456">Lyase</keyword>
<keyword id="KW-0663">Pyridoxal phosphate</keyword>
<accession>J7SZ64</accession>
<evidence type="ECO:0000250" key="1">
    <source>
        <dbReference type="UniProtKB" id="A7B1V0"/>
    </source>
</evidence>
<evidence type="ECO:0000269" key="2">
    <source>
    </source>
</evidence>
<evidence type="ECO:0000303" key="3">
    <source>
    </source>
</evidence>
<evidence type="ECO:0000305" key="4"/>
<evidence type="ECO:0000312" key="5">
    <source>
        <dbReference type="EMBL" id="EDU35915.1"/>
    </source>
</evidence>
<proteinExistence type="evidence at protein level"/>
<name>TRPDC_CLOS1</name>
<feature type="chain" id="PRO_0000446223" description="Tryptophan decarboxylase">
    <location>
        <begin position="1"/>
        <end position="417"/>
    </location>
</feature>
<feature type="modified residue" description="N6-(pyridoxal phosphate)lysine" evidence="1">
    <location>
        <position position="263"/>
    </location>
</feature>
<gene>
    <name evidence="5" type="ORF">CLOSPO_02083</name>
</gene>
<dbReference type="EC" id="4.1.1.105" evidence="2"/>
<dbReference type="EMBL" id="ABKW02000004">
    <property type="protein sequence ID" value="EDU35915.1"/>
    <property type="molecule type" value="Genomic_DNA"/>
</dbReference>
<dbReference type="RefSeq" id="WP_003484002.1">
    <property type="nucleotide sequence ID" value="NZ_DS981517.1"/>
</dbReference>
<dbReference type="SMR" id="J7SZ64"/>
<dbReference type="HOGENOM" id="CLU_028929_2_1_9"/>
<dbReference type="GO" id="GO:0005737">
    <property type="term" value="C:cytoplasm"/>
    <property type="evidence" value="ECO:0007669"/>
    <property type="project" value="UniProtKB-SubCell"/>
</dbReference>
<dbReference type="GO" id="GO:0036469">
    <property type="term" value="F:L-tryptophan decarboxylase activity"/>
    <property type="evidence" value="ECO:0000314"/>
    <property type="project" value="UniProt"/>
</dbReference>
<dbReference type="GO" id="GO:0030170">
    <property type="term" value="F:pyridoxal phosphate binding"/>
    <property type="evidence" value="ECO:0007669"/>
    <property type="project" value="InterPro"/>
</dbReference>
<dbReference type="GO" id="GO:0006568">
    <property type="term" value="P:L-tryptophan metabolic process"/>
    <property type="evidence" value="ECO:0000314"/>
    <property type="project" value="UniProt"/>
</dbReference>
<dbReference type="Gene3D" id="3.40.640.10">
    <property type="entry name" value="Type I PLP-dependent aspartate aminotransferase-like (Major domain)"/>
    <property type="match status" value="1"/>
</dbReference>
<dbReference type="InterPro" id="IPR050477">
    <property type="entry name" value="GrpII_AminoAcid_Decarb"/>
</dbReference>
<dbReference type="InterPro" id="IPR002129">
    <property type="entry name" value="PyrdxlP-dep_de-COase"/>
</dbReference>
<dbReference type="InterPro" id="IPR015424">
    <property type="entry name" value="PyrdxlP-dep_Trfase"/>
</dbReference>
<dbReference type="InterPro" id="IPR015421">
    <property type="entry name" value="PyrdxlP-dep_Trfase_major"/>
</dbReference>
<dbReference type="PANTHER" id="PTHR42735">
    <property type="match status" value="1"/>
</dbReference>
<dbReference type="PANTHER" id="PTHR42735:SF6">
    <property type="entry name" value="SPHINGOSINE-1-PHOSPHATE LYASE 1"/>
    <property type="match status" value="1"/>
</dbReference>
<dbReference type="Pfam" id="PF00282">
    <property type="entry name" value="Pyridoxal_deC"/>
    <property type="match status" value="1"/>
</dbReference>
<dbReference type="SUPFAM" id="SSF53383">
    <property type="entry name" value="PLP-dependent transferases"/>
    <property type="match status" value="1"/>
</dbReference>
<reference key="1">
    <citation type="submission" date="2008-05" db="EMBL/GenBank/DDBJ databases">
        <title>Draft genome sequence of Clostridium sporogenes ATCC 15579.</title>
        <authorList>
            <person name="Sudarsanam P."/>
            <person name="Ley R."/>
            <person name="Guruge J."/>
            <person name="Turnbaugh P.J."/>
            <person name="Mahowald M."/>
            <person name="Liep D."/>
            <person name="Gordon J."/>
            <person name="Fulton L."/>
            <person name="Clifton S."/>
            <person name="Fulton B."/>
            <person name="Xu J."/>
            <person name="Minx P."/>
            <person name="Pepin K.H."/>
            <person name="Johnson M."/>
            <person name="Thiruvilangam P."/>
            <person name="Bhonagiri V."/>
            <person name="Nash W.E."/>
            <person name="Mardis E.R."/>
            <person name="Wilson R.K."/>
        </authorList>
    </citation>
    <scope>NUCLEOTIDE SEQUENCE [LARGE SCALE GENOMIC DNA]</scope>
    <source>
        <strain>ATCC 15579</strain>
    </source>
</reference>
<reference key="2">
    <citation type="journal article" date="2014" name="Cell Host Microbe">
        <title>Discovery and characterization of gut microbiota decarboxylases that can produce the neurotransmitter tryptamine.</title>
        <authorList>
            <person name="Williams B.B."/>
            <person name="Van Benschoten A.H."/>
            <person name="Cimermancic P."/>
            <person name="Donia M.S."/>
            <person name="Zimmermann M."/>
            <person name="Taketani M."/>
            <person name="Ishihara A."/>
            <person name="Kashyap P.C."/>
            <person name="Fraser J.S."/>
            <person name="Fischbach M.A."/>
        </authorList>
    </citation>
    <scope>FUNCTION</scope>
    <scope>CATALYTIC ACTIVITY</scope>
    <scope>ACTIVITY REGULATION</scope>
    <scope>BIOPHYSICOCHEMICAL PROPERTIES</scope>
    <scope>SUBCELLULAR LOCATION</scope>
    <source>
        <strain>ATCC 15579</strain>
    </source>
</reference>
<sequence>MKFWRKYTQQEMDEKITESLEKTLNYDNTKTIGIPGTKLDDTVFYDDHSFVKHSPYLRTFIQNPNHIGCHTYDKADILFGGTFDIERELIQLLAIDVLNGNDEEFDGYVTQGGTEANIQAMWVYRNYFKKERKAKHEEIAIITSADTHYSAYKGSDLLNIDIIKVPVDFYSRKIQENTLDSIVKEAKEIGKKYFIVISNMGTTMFGSVDDPDLYANIFDKYNLEYKIHVDGAFGGFIYPIDNKECKTDFSNKNVSSITLDGHKMLQAPYGTGIFVSRKNLIHNTLTKEATYIENLDVTLSGSRSGSNAVAIWMVLASYGPYGWMEKINKLRNRTKWLCKQLNDMRIKYYKEDSMNIVTIEEQYVNKEIAEKYFLVPEVHNPTNNWYKIVVMEHVELDILNSLVYDLRKFNKEHLKAM</sequence>
<protein>
    <recommendedName>
        <fullName evidence="3">Tryptophan decarboxylase</fullName>
        <shortName evidence="3">Trp decarboxylase</shortName>
        <ecNumber evidence="2">4.1.1.105</ecNumber>
    </recommendedName>
</protein>